<proteinExistence type="inferred from homology"/>
<accession>P65474</accession>
<accession>Q99TC4</accession>
<name>MURC_STAAM</name>
<sequence length="437" mass="49174">MTHYHFVGIKGSGMSSLAQIMHDLGHEVQGSDIENYVFTEVALRNKGIKILPFDANNIKEDMVVIQGNAFASSHEEIVRAHQLKLDVVSYNDFLGQIIDQYTSVAVTGAHGKTSTTGLLSHVMNGDKKTSFLIGDGTGMGLPESDYFAFEACEYRRHFLSYKPDYAIMTNIDFDHPDYFKDINDVFDAFQEMAHNVKKGIIAWGDDEHLRKIEADVPIYYYGFKDSDDIYAQNIQITDKGTAFDVYVDGEFYDHFLSPQYGDHTVLNALAVIAISYLEKLDVTNIKEALETFGGVKRRFNETTIANQVIVDDYAHHPREISATIETARKKYPHKEVVAVFQPHTFSRTQAFLNEFAESLSKADRVFLCEIFGSIRENTGALTIQDLIDKIEGASLINEDSINVLEQFDNAVVLFMGAGDIQKLQNAYLDKLGMKNAF</sequence>
<dbReference type="EC" id="6.3.2.8" evidence="1"/>
<dbReference type="EMBL" id="BA000017">
    <property type="protein sequence ID" value="BAB57902.1"/>
    <property type="molecule type" value="Genomic_DNA"/>
</dbReference>
<dbReference type="RefSeq" id="WP_000150169.1">
    <property type="nucleotide sequence ID" value="NC_002758.2"/>
</dbReference>
<dbReference type="SMR" id="P65474"/>
<dbReference type="KEGG" id="sav:SAV1740"/>
<dbReference type="HOGENOM" id="CLU_028104_1_0_9"/>
<dbReference type="PhylomeDB" id="P65474"/>
<dbReference type="UniPathway" id="UPA00219"/>
<dbReference type="Proteomes" id="UP000002481">
    <property type="component" value="Chromosome"/>
</dbReference>
<dbReference type="GO" id="GO:0005737">
    <property type="term" value="C:cytoplasm"/>
    <property type="evidence" value="ECO:0007669"/>
    <property type="project" value="UniProtKB-SubCell"/>
</dbReference>
<dbReference type="GO" id="GO:0005524">
    <property type="term" value="F:ATP binding"/>
    <property type="evidence" value="ECO:0007669"/>
    <property type="project" value="UniProtKB-UniRule"/>
</dbReference>
<dbReference type="GO" id="GO:0008763">
    <property type="term" value="F:UDP-N-acetylmuramate-L-alanine ligase activity"/>
    <property type="evidence" value="ECO:0007669"/>
    <property type="project" value="UniProtKB-UniRule"/>
</dbReference>
<dbReference type="GO" id="GO:0051301">
    <property type="term" value="P:cell division"/>
    <property type="evidence" value="ECO:0007669"/>
    <property type="project" value="UniProtKB-KW"/>
</dbReference>
<dbReference type="GO" id="GO:0071555">
    <property type="term" value="P:cell wall organization"/>
    <property type="evidence" value="ECO:0007669"/>
    <property type="project" value="UniProtKB-KW"/>
</dbReference>
<dbReference type="GO" id="GO:0009252">
    <property type="term" value="P:peptidoglycan biosynthetic process"/>
    <property type="evidence" value="ECO:0007669"/>
    <property type="project" value="UniProtKB-UniRule"/>
</dbReference>
<dbReference type="GO" id="GO:0008360">
    <property type="term" value="P:regulation of cell shape"/>
    <property type="evidence" value="ECO:0007669"/>
    <property type="project" value="UniProtKB-KW"/>
</dbReference>
<dbReference type="Gene3D" id="3.90.190.20">
    <property type="entry name" value="Mur ligase, C-terminal domain"/>
    <property type="match status" value="1"/>
</dbReference>
<dbReference type="Gene3D" id="3.40.1190.10">
    <property type="entry name" value="Mur-like, catalytic domain"/>
    <property type="match status" value="1"/>
</dbReference>
<dbReference type="Gene3D" id="3.40.50.720">
    <property type="entry name" value="NAD(P)-binding Rossmann-like Domain"/>
    <property type="match status" value="1"/>
</dbReference>
<dbReference type="HAMAP" id="MF_00046">
    <property type="entry name" value="MurC"/>
    <property type="match status" value="1"/>
</dbReference>
<dbReference type="InterPro" id="IPR036565">
    <property type="entry name" value="Mur-like_cat_sf"/>
</dbReference>
<dbReference type="InterPro" id="IPR004101">
    <property type="entry name" value="Mur_ligase_C"/>
</dbReference>
<dbReference type="InterPro" id="IPR036615">
    <property type="entry name" value="Mur_ligase_C_dom_sf"/>
</dbReference>
<dbReference type="InterPro" id="IPR013221">
    <property type="entry name" value="Mur_ligase_cen"/>
</dbReference>
<dbReference type="InterPro" id="IPR000713">
    <property type="entry name" value="Mur_ligase_N"/>
</dbReference>
<dbReference type="InterPro" id="IPR050061">
    <property type="entry name" value="MurCDEF_pg_biosynth"/>
</dbReference>
<dbReference type="InterPro" id="IPR005758">
    <property type="entry name" value="UDP-N-AcMur_Ala_ligase_MurC"/>
</dbReference>
<dbReference type="NCBIfam" id="TIGR01082">
    <property type="entry name" value="murC"/>
    <property type="match status" value="1"/>
</dbReference>
<dbReference type="PANTHER" id="PTHR43445:SF3">
    <property type="entry name" value="UDP-N-ACETYLMURAMATE--L-ALANINE LIGASE"/>
    <property type="match status" value="1"/>
</dbReference>
<dbReference type="PANTHER" id="PTHR43445">
    <property type="entry name" value="UDP-N-ACETYLMURAMATE--L-ALANINE LIGASE-RELATED"/>
    <property type="match status" value="1"/>
</dbReference>
<dbReference type="Pfam" id="PF01225">
    <property type="entry name" value="Mur_ligase"/>
    <property type="match status" value="1"/>
</dbReference>
<dbReference type="Pfam" id="PF02875">
    <property type="entry name" value="Mur_ligase_C"/>
    <property type="match status" value="1"/>
</dbReference>
<dbReference type="Pfam" id="PF08245">
    <property type="entry name" value="Mur_ligase_M"/>
    <property type="match status" value="1"/>
</dbReference>
<dbReference type="SUPFAM" id="SSF51984">
    <property type="entry name" value="MurCD N-terminal domain"/>
    <property type="match status" value="1"/>
</dbReference>
<dbReference type="SUPFAM" id="SSF53623">
    <property type="entry name" value="MurD-like peptide ligases, catalytic domain"/>
    <property type="match status" value="1"/>
</dbReference>
<dbReference type="SUPFAM" id="SSF53244">
    <property type="entry name" value="MurD-like peptide ligases, peptide-binding domain"/>
    <property type="match status" value="1"/>
</dbReference>
<protein>
    <recommendedName>
        <fullName evidence="1">UDP-N-acetylmuramate--L-alanine ligase</fullName>
        <ecNumber evidence="1">6.3.2.8</ecNumber>
    </recommendedName>
    <alternativeName>
        <fullName evidence="1">UDP-N-acetylmuramoyl-L-alanine synthetase</fullName>
    </alternativeName>
</protein>
<keyword id="KW-0067">ATP-binding</keyword>
<keyword id="KW-0131">Cell cycle</keyword>
<keyword id="KW-0132">Cell division</keyword>
<keyword id="KW-0133">Cell shape</keyword>
<keyword id="KW-0961">Cell wall biogenesis/degradation</keyword>
<keyword id="KW-0963">Cytoplasm</keyword>
<keyword id="KW-0436">Ligase</keyword>
<keyword id="KW-0547">Nucleotide-binding</keyword>
<keyword id="KW-0573">Peptidoglycan synthesis</keyword>
<feature type="chain" id="PRO_0000182153" description="UDP-N-acetylmuramate--L-alanine ligase">
    <location>
        <begin position="1"/>
        <end position="437"/>
    </location>
</feature>
<feature type="binding site" evidence="1">
    <location>
        <begin position="108"/>
        <end position="114"/>
    </location>
    <ligand>
        <name>ATP</name>
        <dbReference type="ChEBI" id="CHEBI:30616"/>
    </ligand>
</feature>
<comment type="function">
    <text evidence="1">Cell wall formation.</text>
</comment>
<comment type="catalytic activity">
    <reaction evidence="1">
        <text>UDP-N-acetyl-alpha-D-muramate + L-alanine + ATP = UDP-N-acetyl-alpha-D-muramoyl-L-alanine + ADP + phosphate + H(+)</text>
        <dbReference type="Rhea" id="RHEA:23372"/>
        <dbReference type="ChEBI" id="CHEBI:15378"/>
        <dbReference type="ChEBI" id="CHEBI:30616"/>
        <dbReference type="ChEBI" id="CHEBI:43474"/>
        <dbReference type="ChEBI" id="CHEBI:57972"/>
        <dbReference type="ChEBI" id="CHEBI:70757"/>
        <dbReference type="ChEBI" id="CHEBI:83898"/>
        <dbReference type="ChEBI" id="CHEBI:456216"/>
        <dbReference type="EC" id="6.3.2.8"/>
    </reaction>
</comment>
<comment type="pathway">
    <text evidence="1">Cell wall biogenesis; peptidoglycan biosynthesis.</text>
</comment>
<comment type="subcellular location">
    <subcellularLocation>
        <location evidence="1">Cytoplasm</location>
    </subcellularLocation>
</comment>
<comment type="similarity">
    <text evidence="1">Belongs to the MurCDEF family.</text>
</comment>
<reference key="1">
    <citation type="journal article" date="2001" name="Lancet">
        <title>Whole genome sequencing of meticillin-resistant Staphylococcus aureus.</title>
        <authorList>
            <person name="Kuroda M."/>
            <person name="Ohta T."/>
            <person name="Uchiyama I."/>
            <person name="Baba T."/>
            <person name="Yuzawa H."/>
            <person name="Kobayashi I."/>
            <person name="Cui L."/>
            <person name="Oguchi A."/>
            <person name="Aoki K."/>
            <person name="Nagai Y."/>
            <person name="Lian J.-Q."/>
            <person name="Ito T."/>
            <person name="Kanamori M."/>
            <person name="Matsumaru H."/>
            <person name="Maruyama A."/>
            <person name="Murakami H."/>
            <person name="Hosoyama A."/>
            <person name="Mizutani-Ui Y."/>
            <person name="Takahashi N.K."/>
            <person name="Sawano T."/>
            <person name="Inoue R."/>
            <person name="Kaito C."/>
            <person name="Sekimizu K."/>
            <person name="Hirakawa H."/>
            <person name="Kuhara S."/>
            <person name="Goto S."/>
            <person name="Yabuzaki J."/>
            <person name="Kanehisa M."/>
            <person name="Yamashita A."/>
            <person name="Oshima K."/>
            <person name="Furuya K."/>
            <person name="Yoshino C."/>
            <person name="Shiba T."/>
            <person name="Hattori M."/>
            <person name="Ogasawara N."/>
            <person name="Hayashi H."/>
            <person name="Hiramatsu K."/>
        </authorList>
    </citation>
    <scope>NUCLEOTIDE SEQUENCE [LARGE SCALE GENOMIC DNA]</scope>
    <source>
        <strain>Mu50 / ATCC 700699</strain>
    </source>
</reference>
<evidence type="ECO:0000255" key="1">
    <source>
        <dbReference type="HAMAP-Rule" id="MF_00046"/>
    </source>
</evidence>
<gene>
    <name evidence="1" type="primary">murC</name>
    <name type="ordered locus">SAV1740</name>
</gene>
<organism>
    <name type="scientific">Staphylococcus aureus (strain Mu50 / ATCC 700699)</name>
    <dbReference type="NCBI Taxonomy" id="158878"/>
    <lineage>
        <taxon>Bacteria</taxon>
        <taxon>Bacillati</taxon>
        <taxon>Bacillota</taxon>
        <taxon>Bacilli</taxon>
        <taxon>Bacillales</taxon>
        <taxon>Staphylococcaceae</taxon>
        <taxon>Staphylococcus</taxon>
    </lineage>
</organism>